<feature type="chain" id="PRO_1000070521" description="Nucleoid occlusion factor SlmA">
    <location>
        <begin position="1"/>
        <end position="218"/>
    </location>
</feature>
<feature type="domain" description="HTH tetR-type" evidence="1">
    <location>
        <begin position="30"/>
        <end position="90"/>
    </location>
</feature>
<feature type="DNA-binding region" description="H-T-H motif" evidence="1">
    <location>
        <begin position="53"/>
        <end position="72"/>
    </location>
</feature>
<evidence type="ECO:0000255" key="1">
    <source>
        <dbReference type="HAMAP-Rule" id="MF_01839"/>
    </source>
</evidence>
<comment type="function">
    <text evidence="1">Required for nucleoid occlusion (NO) phenomenon, which prevents Z-ring formation and cell division over the nucleoid. Acts as a DNA-associated cell division inhibitor that binds simultaneously chromosomal DNA and FtsZ, and disrupts the assembly of FtsZ polymers. SlmA-DNA-binding sequences (SBS) are dispersed on non-Ter regions of the chromosome, preventing FtsZ polymerization at these regions.</text>
</comment>
<comment type="subunit">
    <text evidence="1">Homodimer. Interacts with FtsZ.</text>
</comment>
<comment type="subcellular location">
    <subcellularLocation>
        <location evidence="1">Cytoplasm</location>
        <location evidence="1">Nucleoid</location>
    </subcellularLocation>
</comment>
<comment type="similarity">
    <text evidence="1">Belongs to the nucleoid occlusion factor SlmA family.</text>
</comment>
<organism>
    <name type="scientific">Haemophilus influenzae (strain PittGG)</name>
    <dbReference type="NCBI Taxonomy" id="374931"/>
    <lineage>
        <taxon>Bacteria</taxon>
        <taxon>Pseudomonadati</taxon>
        <taxon>Pseudomonadota</taxon>
        <taxon>Gammaproteobacteria</taxon>
        <taxon>Pasteurellales</taxon>
        <taxon>Pasteurellaceae</taxon>
        <taxon>Haemophilus</taxon>
    </lineage>
</organism>
<name>SLMA_HAEIG</name>
<accession>A5UI96</accession>
<reference key="1">
    <citation type="journal article" date="2007" name="Genome Biol.">
        <title>Characterization and modeling of the Haemophilus influenzae core and supragenomes based on the complete genomic sequences of Rd and 12 clinical nontypeable strains.</title>
        <authorList>
            <person name="Hogg J.S."/>
            <person name="Hu F.Z."/>
            <person name="Janto B."/>
            <person name="Boissy R."/>
            <person name="Hayes J."/>
            <person name="Keefe R."/>
            <person name="Post J.C."/>
            <person name="Ehrlich G.D."/>
        </authorList>
    </citation>
    <scope>NUCLEOTIDE SEQUENCE [LARGE SCALE GENOMIC DNA]</scope>
    <source>
        <strain>PittGG</strain>
    </source>
</reference>
<keyword id="KW-0131">Cell cycle</keyword>
<keyword id="KW-0132">Cell division</keyword>
<keyword id="KW-0963">Cytoplasm</keyword>
<keyword id="KW-0238">DNA-binding</keyword>
<gene>
    <name evidence="1" type="primary">slmA</name>
    <name type="ordered locus">CGSHiGG_08350</name>
</gene>
<sequence length="218" mass="25577">MVEEQLSLSGVEEIAPKIETPKIEKRTVKERRQQVLTVLIHMLHSERGMERMTTARLAKEVGVSEAALYRYFPSKTKMFEALIEHIESTLLSRITASMRNETQTMNRIHDILQTILDFARKNPGLTRVLTGHALMFEEAQLQARVAQFFDRLEMQFVNILQMRKLREGRAFNVDERIIASHLVTLCEGQFMRYVRTNFRLNSSQSFEQQWRFIEPLFA</sequence>
<dbReference type="EMBL" id="CP000672">
    <property type="protein sequence ID" value="ABR00502.1"/>
    <property type="molecule type" value="Genomic_DNA"/>
</dbReference>
<dbReference type="SMR" id="A5UI96"/>
<dbReference type="KEGG" id="hiq:CGSHiGG_08350"/>
<dbReference type="HOGENOM" id="CLU_069356_5_0_6"/>
<dbReference type="Proteomes" id="UP000001990">
    <property type="component" value="Chromosome"/>
</dbReference>
<dbReference type="GO" id="GO:0043590">
    <property type="term" value="C:bacterial nucleoid"/>
    <property type="evidence" value="ECO:0007669"/>
    <property type="project" value="UniProtKB-UniRule"/>
</dbReference>
<dbReference type="GO" id="GO:0005737">
    <property type="term" value="C:cytoplasm"/>
    <property type="evidence" value="ECO:0007669"/>
    <property type="project" value="UniProtKB-UniRule"/>
</dbReference>
<dbReference type="GO" id="GO:0043565">
    <property type="term" value="F:sequence-specific DNA binding"/>
    <property type="evidence" value="ECO:0007669"/>
    <property type="project" value="UniProtKB-UniRule"/>
</dbReference>
<dbReference type="GO" id="GO:0051301">
    <property type="term" value="P:cell division"/>
    <property type="evidence" value="ECO:0007669"/>
    <property type="project" value="UniProtKB-KW"/>
</dbReference>
<dbReference type="GO" id="GO:0010974">
    <property type="term" value="P:negative regulation of division septum assembly"/>
    <property type="evidence" value="ECO:0007669"/>
    <property type="project" value="InterPro"/>
</dbReference>
<dbReference type="Gene3D" id="1.10.357.10">
    <property type="entry name" value="Tetracycline Repressor, domain 2"/>
    <property type="match status" value="1"/>
</dbReference>
<dbReference type="HAMAP" id="MF_01839">
    <property type="entry name" value="NO_factor_SlmA"/>
    <property type="match status" value="1"/>
</dbReference>
<dbReference type="InterPro" id="IPR023772">
    <property type="entry name" value="DNA-bd_HTH_TetR-type_CS"/>
</dbReference>
<dbReference type="InterPro" id="IPR009057">
    <property type="entry name" value="Homeodomain-like_sf"/>
</dbReference>
<dbReference type="InterPro" id="IPR050624">
    <property type="entry name" value="HTH-type_Tx_Regulator"/>
</dbReference>
<dbReference type="InterPro" id="IPR001647">
    <property type="entry name" value="HTH_TetR"/>
</dbReference>
<dbReference type="InterPro" id="IPR023769">
    <property type="entry name" value="NO_SlmA"/>
</dbReference>
<dbReference type="InterPro" id="IPR054580">
    <property type="entry name" value="SlmA-like_C"/>
</dbReference>
<dbReference type="InterPro" id="IPR036271">
    <property type="entry name" value="Tet_transcr_reg_TetR-rel_C_sf"/>
</dbReference>
<dbReference type="NCBIfam" id="NF007015">
    <property type="entry name" value="PRK09480.1"/>
    <property type="match status" value="1"/>
</dbReference>
<dbReference type="PANTHER" id="PTHR43479">
    <property type="entry name" value="ACREF/ENVCD OPERON REPRESSOR-RELATED"/>
    <property type="match status" value="1"/>
</dbReference>
<dbReference type="PANTHER" id="PTHR43479:SF11">
    <property type="entry name" value="ACREF_ENVCD OPERON REPRESSOR-RELATED"/>
    <property type="match status" value="1"/>
</dbReference>
<dbReference type="Pfam" id="PF22276">
    <property type="entry name" value="SlmA-like_C"/>
    <property type="match status" value="1"/>
</dbReference>
<dbReference type="Pfam" id="PF00440">
    <property type="entry name" value="TetR_N"/>
    <property type="match status" value="1"/>
</dbReference>
<dbReference type="SUPFAM" id="SSF46689">
    <property type="entry name" value="Homeodomain-like"/>
    <property type="match status" value="1"/>
</dbReference>
<dbReference type="SUPFAM" id="SSF48498">
    <property type="entry name" value="Tetracyclin repressor-like, C-terminal domain"/>
    <property type="match status" value="1"/>
</dbReference>
<dbReference type="PROSITE" id="PS01081">
    <property type="entry name" value="HTH_TETR_1"/>
    <property type="match status" value="1"/>
</dbReference>
<dbReference type="PROSITE" id="PS50977">
    <property type="entry name" value="HTH_TETR_2"/>
    <property type="match status" value="1"/>
</dbReference>
<protein>
    <recommendedName>
        <fullName evidence="1">Nucleoid occlusion factor SlmA</fullName>
    </recommendedName>
</protein>
<proteinExistence type="inferred from homology"/>